<protein>
    <recommendedName>
        <fullName evidence="9">Protein transport protein Sec23A</fullName>
    </recommendedName>
    <alternativeName>
        <fullName>SEC23-related protein A</fullName>
    </alternativeName>
</protein>
<feature type="initiator methionine" description="Removed" evidence="1">
    <location>
        <position position="1"/>
    </location>
</feature>
<feature type="chain" id="PRO_0000205147" description="Protein transport protein Sec23A">
    <location>
        <begin position="2"/>
        <end position="765"/>
    </location>
</feature>
<feature type="repeat" description="Gelsolin-like" evidence="2">
    <location>
        <begin position="632"/>
        <end position="718"/>
    </location>
</feature>
<feature type="binding site" evidence="1">
    <location>
        <position position="61"/>
    </location>
    <ligand>
        <name>Zn(2+)</name>
        <dbReference type="ChEBI" id="CHEBI:29105"/>
    </ligand>
</feature>
<feature type="binding site" evidence="1">
    <location>
        <position position="66"/>
    </location>
    <ligand>
        <name>Zn(2+)</name>
        <dbReference type="ChEBI" id="CHEBI:29105"/>
    </ligand>
</feature>
<feature type="binding site" evidence="1">
    <location>
        <position position="85"/>
    </location>
    <ligand>
        <name>Zn(2+)</name>
        <dbReference type="ChEBI" id="CHEBI:29105"/>
    </ligand>
</feature>
<feature type="binding site" evidence="1">
    <location>
        <position position="88"/>
    </location>
    <ligand>
        <name>Zn(2+)</name>
        <dbReference type="ChEBI" id="CHEBI:29105"/>
    </ligand>
</feature>
<feature type="modified residue" description="N-acetylthreonine" evidence="1">
    <location>
        <position position="2"/>
    </location>
</feature>
<feature type="modified residue" description="Phosphothreonine" evidence="1">
    <location>
        <position position="308"/>
    </location>
</feature>
<feature type="sequence conflict" description="In Ref. 3; BAA02209." evidence="9" ref="3">
    <original>KLW</original>
    <variation>TR</variation>
    <location>
        <begin position="81"/>
        <end position="83"/>
    </location>
</feature>
<feature type="sequence conflict" description="In Ref. 3; BAA02209." evidence="9" ref="3">
    <original>RN</original>
    <variation>D</variation>
    <location>
        <begin position="91"/>
        <end position="92"/>
    </location>
</feature>
<feature type="sequence conflict" description="In Ref. 3; BAA02209." evidence="9" ref="3">
    <original>A</original>
    <variation>S</variation>
    <location>
        <position position="99"/>
    </location>
</feature>
<feature type="sequence conflict" description="In Ref. 3; BAA02209." evidence="9" ref="3">
    <original>A</original>
    <variation>R</variation>
    <location>
        <position position="108"/>
    </location>
</feature>
<feature type="sequence conflict" description="In Ref. 3; BAA02209." evidence="9" ref="3">
    <original>SSI</original>
    <variation>QS</variation>
    <location>
        <begin position="115"/>
        <end position="117"/>
    </location>
</feature>
<feature type="sequence conflict" description="In Ref. 3; BAA02209." evidence="9" ref="3">
    <original>L</original>
    <variation>F</variation>
    <location>
        <position position="129"/>
    </location>
</feature>
<feature type="sequence conflict" description="In Ref. 3; BAA02209." evidence="9" ref="3">
    <original>MSLSL</original>
    <variation>TTFS</variation>
    <location>
        <begin position="153"/>
        <end position="157"/>
    </location>
</feature>
<feature type="sequence conflict" description="In Ref. 3; BAA02209." evidence="9" ref="3">
    <original>M</original>
    <variation>I</variation>
    <location>
        <position position="172"/>
    </location>
</feature>
<feature type="sequence conflict" description="In Ref. 3; BAA02209." evidence="9" ref="3">
    <original>RG</original>
    <variation>S</variation>
    <location>
        <begin position="216"/>
        <end position="217"/>
    </location>
</feature>
<feature type="sequence conflict" description="In Ref. 3; BAA02209." evidence="9" ref="3">
    <original>S</original>
    <variation>P</variation>
    <location>
        <position position="263"/>
    </location>
</feature>
<feature type="sequence conflict" description="In Ref. 3; BAA02209." evidence="9" ref="3">
    <original>P</original>
    <variation>S</variation>
    <location>
        <position position="293"/>
    </location>
</feature>
<feature type="sequence conflict" description="In Ref. 3; BAA02209." evidence="9" ref="3">
    <original>I</original>
    <variation>M</variation>
    <location>
        <position position="310"/>
    </location>
</feature>
<feature type="sequence conflict" description="In Ref. 3; BAA02209." evidence="9" ref="3">
    <original>A</original>
    <variation>R</variation>
    <location>
        <position position="515"/>
    </location>
</feature>
<feature type="sequence conflict" description="In Ref. 3; BAA02209." evidence="9" ref="3">
    <original>A</original>
    <variation>P</variation>
    <location>
        <position position="523"/>
    </location>
</feature>
<feature type="sequence conflict" description="In Ref. 3; BAA02209." evidence="9" ref="3">
    <original>P</original>
    <variation>R</variation>
    <location>
        <position position="631"/>
    </location>
</feature>
<gene>
    <name evidence="10" type="primary">Sec23a</name>
    <name type="synonym">Sec23</name>
    <name type="synonym">Sec23r</name>
</gene>
<sequence>MTTYLEFIQQNEERDGVRFSWNVWPSSRLEATRMVVPVAALFTPLKERPDLPPIQYEPVLCSRTTCRAVLNPLCQVDYRAKLWACNFCYQRNQFPPTYAGISELNQPAELLPQFSSIEYVVLRGPQMPLIFLYVVDTCIEDEDLQALKESMQMSLSLLPPTALVGLITFGRMVQVHELGCEGISKSYVFRGTKDLSAKQLQEMLGLSKVPVTQATRGPQVQQPPPSNRFLQPVQKIDMNLTDLLGELQRDPWPVPQGKRPLRSSGVALSIAVGLLECTFPNTGARIMMFIGGPATQGPGMVVGDELKTPIRSWHDIEKDNAKYVKKGTKHFEALANRAATTGHVIDIYACALDQTGLLEMKCCPNLTGGYMVMGDSFNTSLFKQTFQRVFTKDIHGQFKMGFGGTLEIKTSREIKISGAIGPCVSLNSKGPCVSENEIGTGGTCQWKICGLSPTTTLAIYFEVVNQHNAPIPQGGRGAVQFVTQYQHSSGQRRIRVTTIARNWADAQTQIQNIAASFDQEAAAILMARLAIYRAETEEGPDVLRWLDRQLIRLCQKFGEYHKDDPNSFRFSETFSLYPQFMFHLRRSPFLQVFNNSPDESSYYRHHFMRQDLTQSLIMIQPILYAYSFSGPPEPVLLDSSSILADRILLMDTFFQILIYHGETIAQWRKSGYQDMPEYENFRHLLQAPVDDAQEILHSRFPMPRYIDTEHGGSQARFLLSKVNPSQTHNNMYAWGQESGAPILTDDVSLQVFMDHLKKLAVSSAA</sequence>
<name>SC23A_MOUSE</name>
<organism>
    <name type="scientific">Mus musculus</name>
    <name type="common">Mouse</name>
    <dbReference type="NCBI Taxonomy" id="10090"/>
    <lineage>
        <taxon>Eukaryota</taxon>
        <taxon>Metazoa</taxon>
        <taxon>Chordata</taxon>
        <taxon>Craniata</taxon>
        <taxon>Vertebrata</taxon>
        <taxon>Euteleostomi</taxon>
        <taxon>Mammalia</taxon>
        <taxon>Eutheria</taxon>
        <taxon>Euarchontoglires</taxon>
        <taxon>Glires</taxon>
        <taxon>Rodentia</taxon>
        <taxon>Myomorpha</taxon>
        <taxon>Muroidea</taxon>
        <taxon>Muridae</taxon>
        <taxon>Murinae</taxon>
        <taxon>Mus</taxon>
        <taxon>Mus</taxon>
    </lineage>
</organism>
<proteinExistence type="evidence at protein level"/>
<keyword id="KW-0007">Acetylation</keyword>
<keyword id="KW-0963">Cytoplasm</keyword>
<keyword id="KW-0968">Cytoplasmic vesicle</keyword>
<keyword id="KW-0256">Endoplasmic reticulum</keyword>
<keyword id="KW-0931">ER-Golgi transport</keyword>
<keyword id="KW-0472">Membrane</keyword>
<keyword id="KW-0479">Metal-binding</keyword>
<keyword id="KW-0597">Phosphoprotein</keyword>
<keyword id="KW-0653">Protein transport</keyword>
<keyword id="KW-1185">Reference proteome</keyword>
<keyword id="KW-0813">Transport</keyword>
<keyword id="KW-0862">Zinc</keyword>
<reference key="1">
    <citation type="journal article" date="2002" name="Proc. Natl. Acad. Sci. U.S.A.">
        <title>Sterols block binding of COPII proteins to SCAP, thereby controlling SCAP sorting in ER.</title>
        <authorList>
            <person name="Espenshade P.J."/>
            <person name="Li W.-P."/>
            <person name="Yabe D."/>
        </authorList>
    </citation>
    <scope>NUCLEOTIDE SEQUENCE [MRNA]</scope>
    <source>
        <strain>C57BL/6J</strain>
    </source>
</reference>
<reference key="2">
    <citation type="journal article" date="2004" name="Genome Res.">
        <title>The status, quality, and expansion of the NIH full-length cDNA project: the Mammalian Gene Collection (MGC).</title>
        <authorList>
            <consortium name="The MGC Project Team"/>
        </authorList>
    </citation>
    <scope>NUCLEOTIDE SEQUENCE [LARGE SCALE MRNA]</scope>
    <source>
        <tissue>Retina</tissue>
    </source>
</reference>
<reference key="3">
    <citation type="journal article" date="1993" name="FEBS Lett.">
        <title>Identification and differential expression of yeast SEC23-related gene (Msec23) in mouse tissues.</title>
        <authorList>
            <person name="Wadhwa R."/>
            <person name="Kaul S.C."/>
            <person name="Komatsu Y."/>
            <person name="Ikawa Y."/>
            <person name="Sarai A."/>
            <person name="Sugimoto Y."/>
        </authorList>
    </citation>
    <scope>NUCLEOTIDE SEQUENCE [GENOMIC DNA] OF 1-631</scope>
    <scope>TISSUE SPECIFICITY</scope>
    <source>
        <tissue>Fibroblast</tissue>
    </source>
</reference>
<reference key="4">
    <citation type="journal article" date="1999" name="J. Biol. Chem.">
        <title>p125 is a novel mammalian Sec23p-interacting protein with structural similarity to phospholipid-modifying proteins.</title>
        <authorList>
            <person name="Tani K."/>
            <person name="Mizoguchi T."/>
            <person name="Iwamatsu A."/>
            <person name="Hatsuzawa K."/>
            <person name="Tagaya M."/>
        </authorList>
    </citation>
    <scope>INTERACTION WITH SEC23IP</scope>
</reference>
<reference key="5">
    <citation type="journal article" date="2004" name="J. Cell Sci.">
        <title>New sorting nexin (SNX27) and NHERF specifically interact with the 5-HT4a receptor splice variant: roles in receptor targeting.</title>
        <authorList>
            <person name="Joubert L."/>
            <person name="Hanson B."/>
            <person name="Barthet G."/>
            <person name="Sebben M."/>
            <person name="Claeysen S."/>
            <person name="Hong W."/>
            <person name="Marin P."/>
            <person name="Dumuis A."/>
            <person name="Bockaert J."/>
        </authorList>
    </citation>
    <scope>INTERACTION WITH HTR4</scope>
</reference>
<reference key="6">
    <citation type="journal article" date="2007" name="J. Biol. Chem.">
        <title>Mammalian Sec16/p250 plays a role in membrane traffic from the endoplasmic reticulum.</title>
        <authorList>
            <person name="Iinuma T."/>
            <person name="Shiga A."/>
            <person name="Nakamoto K."/>
            <person name="O'Brien M.B."/>
            <person name="Aridor M."/>
            <person name="Arimitsu N."/>
            <person name="Tagaya M."/>
            <person name="Tani K."/>
        </authorList>
    </citation>
    <scope>INTERACTION WITH SEC16A AND DDHD1</scope>
</reference>
<reference key="7">
    <citation type="journal article" date="2007" name="Proc. Natl. Acad. Sci. U.S.A.">
        <title>Physical interaction between the serotonin transporter and neuronal nitric oxide synthase underlies reciprocal modulation of their activity.</title>
        <authorList>
            <person name="Chanrion B."/>
            <person name="Mannoury la Cour C."/>
            <person name="Bertaso F."/>
            <person name="Lerner-Natoli M."/>
            <person name="Freissmuth M."/>
            <person name="Millan M.J."/>
            <person name="Bockaert J."/>
            <person name="Marin P."/>
        </authorList>
    </citation>
    <scope>INTERACTION WITH SLC6A4</scope>
</reference>
<reference key="8">
    <citation type="journal article" date="2010" name="Cell">
        <title>A tissue-specific atlas of mouse protein phosphorylation and expression.</title>
        <authorList>
            <person name="Huttlin E.L."/>
            <person name="Jedrychowski M.P."/>
            <person name="Elias J.E."/>
            <person name="Goswami T."/>
            <person name="Rad R."/>
            <person name="Beausoleil S.A."/>
            <person name="Villen J."/>
            <person name="Haas W."/>
            <person name="Sowa M.E."/>
            <person name="Gygi S.P."/>
        </authorList>
    </citation>
    <scope>IDENTIFICATION BY MASS SPECTROMETRY [LARGE SCALE ANALYSIS]</scope>
    <source>
        <tissue>Brain</tissue>
        <tissue>Brown adipose tissue</tissue>
        <tissue>Heart</tissue>
        <tissue>Kidney</tissue>
        <tissue>Liver</tissue>
        <tissue>Lung</tissue>
        <tissue>Pancreas</tissue>
        <tissue>Spleen</tissue>
        <tissue>Testis</tissue>
    </source>
</reference>
<reference key="9">
    <citation type="journal article" date="2016" name="J. Cell Biol.">
        <title>SEC16A is a RAB10 effector required for insulin-stimulated GLUT4 trafficking in adipocytes.</title>
        <authorList>
            <person name="Bruno J."/>
            <person name="Brumfield A."/>
            <person name="Chaudhary N."/>
            <person name="Iaea D."/>
            <person name="McGraw T.E."/>
        </authorList>
    </citation>
    <scope>FUNCTION</scope>
</reference>
<comment type="function">
    <text evidence="1 7">Component of the coat protein complex II (COPII) which promotes the formation of transport vesicles from the endoplasmic reticulum (ER). The coat has two main functions, the physical deformation of the endoplasmic reticulum membrane into vesicles and the selection of cargo molecules for their transport to the Golgi complex (By similarity). Required for the translocation of insulin-induced glucose transporter SLC2A4/GLUT4 to the cell membrane (PubMed:27354378).</text>
</comment>
<comment type="subunit">
    <text evidence="1 3 4 5 6">COPII is composed of at least five proteins: the Sec23/24 complex, the Sec13/31 complex and Sar1 (By similarity). Interacts with SEC23IP (PubMed:10400679). Interacts with HTR4 (PubMed:15466885). Interacts with SEC16A (PubMed:17428803). Interacts with SLC6A4 (PubMed:17452640). Interacts (as part of the Sec23/24 complex) with SEC22B; recruits SEC22B into COPII-coated vesicles and allows the transport of this cargo from the endoplasmic reticulum to the Golgi. Interacts (via Gelsolin-like repeat) with MIA2 and MIA3; specifically involved in the transport of large cargos like the collagen COL7A1 (By similarity). Interacts with DDHD1 (PubMed:17428803). Interacts with TMEM39A (By similarity). Interacts with SACM1L; this interaction is reduced in the absence of TMEM39A (By similarity). Interacts with kinase FAM20C; transport of FAM20C from the endoplasmic reticulum to the Golgi is likely to be mediated by COPII vesicles (By similarity).</text>
</comment>
<comment type="interaction">
    <interactant intactId="EBI-775901">
        <id>Q01405</id>
    </interactant>
    <interactant intactId="EBI-3920694">
        <id>Q9NR31</id>
        <label>SAR1A</label>
    </interactant>
    <organismsDiffer>true</organismsDiffer>
    <experiments>2</experiments>
</comment>
<comment type="subcellular location">
    <subcellularLocation>
        <location evidence="1">Cytoplasmic vesicle</location>
        <location evidence="1">COPII-coated vesicle membrane</location>
        <topology evidence="1">Peripheral membrane protein</topology>
        <orientation evidence="1">Cytoplasmic side</orientation>
    </subcellularLocation>
    <subcellularLocation>
        <location evidence="1">Endoplasmic reticulum membrane</location>
        <topology evidence="1">Peripheral membrane protein</topology>
        <orientation evidence="1">Cytoplasmic side</orientation>
    </subcellularLocation>
    <subcellularLocation>
        <location evidence="1">Cytoplasm</location>
        <location evidence="1">Cytosol</location>
    </subcellularLocation>
    <text evidence="1">Enriched at endoplasmic reticulum exit sites (ERES), also known as transitional endoplasmic reticulum (tER).</text>
</comment>
<comment type="tissue specificity">
    <text evidence="8">High levels in brain and fibroblasts.</text>
</comment>
<comment type="domain">
    <text evidence="1">The Gelsolin-like repeat mediates interaction with proteins containing PPP motifs that include MIA2, MIA3 but also SEC31A. These interactions are probably competitive.</text>
</comment>
<comment type="similarity">
    <text evidence="9">Belongs to the SEC23/SEC24 family. SEC23 subfamily.</text>
</comment>
<comment type="sequence caution" evidence="9">
    <conflict type="frameshift">
        <sequence resource="EMBL-CDS" id="BAA02209"/>
    </conflict>
</comment>
<evidence type="ECO:0000250" key="1">
    <source>
        <dbReference type="UniProtKB" id="Q15436"/>
    </source>
</evidence>
<evidence type="ECO:0000255" key="2"/>
<evidence type="ECO:0000269" key="3">
    <source>
    </source>
</evidence>
<evidence type="ECO:0000269" key="4">
    <source>
    </source>
</evidence>
<evidence type="ECO:0000269" key="5">
    <source>
    </source>
</evidence>
<evidence type="ECO:0000269" key="6">
    <source>
    </source>
</evidence>
<evidence type="ECO:0000269" key="7">
    <source>
    </source>
</evidence>
<evidence type="ECO:0000269" key="8">
    <source>
    </source>
</evidence>
<evidence type="ECO:0000305" key="9"/>
<evidence type="ECO:0000312" key="10">
    <source>
        <dbReference type="MGI" id="MGI:1349635"/>
    </source>
</evidence>
<dbReference type="EMBL" id="AY082671">
    <property type="protein sequence ID" value="AAL92480.1"/>
    <property type="molecule type" value="mRNA"/>
</dbReference>
<dbReference type="EMBL" id="BC034610">
    <property type="protein sequence ID" value="AAH34610.1"/>
    <property type="molecule type" value="mRNA"/>
</dbReference>
<dbReference type="EMBL" id="D12713">
    <property type="protein sequence ID" value="BAA02209.1"/>
    <property type="status" value="ALT_FRAME"/>
    <property type="molecule type" value="Genomic_DNA"/>
</dbReference>
<dbReference type="CCDS" id="CCDS25931.1"/>
<dbReference type="PIR" id="S28142">
    <property type="entry name" value="I60247"/>
</dbReference>
<dbReference type="RefSeq" id="NP_001348885.1">
    <property type="nucleotide sequence ID" value="NM_001361956.1"/>
</dbReference>
<dbReference type="RefSeq" id="NP_033173.2">
    <property type="nucleotide sequence ID" value="NM_009147.2"/>
</dbReference>
<dbReference type="RefSeq" id="XP_006515691.1">
    <property type="nucleotide sequence ID" value="XM_006515628.3"/>
</dbReference>
<dbReference type="SMR" id="Q01405"/>
<dbReference type="BioGRID" id="203150">
    <property type="interactions" value="32"/>
</dbReference>
<dbReference type="CORUM" id="Q01405"/>
<dbReference type="DIP" id="DIP-32032N"/>
<dbReference type="FunCoup" id="Q01405">
    <property type="interactions" value="3279"/>
</dbReference>
<dbReference type="IntAct" id="Q01405">
    <property type="interactions" value="8"/>
</dbReference>
<dbReference type="MINT" id="Q01405"/>
<dbReference type="STRING" id="10090.ENSMUSP00000021375"/>
<dbReference type="GlyGen" id="Q01405">
    <property type="glycosylation" value="2 sites, 1 O-linked glycan (2 sites)"/>
</dbReference>
<dbReference type="iPTMnet" id="Q01405"/>
<dbReference type="PhosphoSitePlus" id="Q01405"/>
<dbReference type="SwissPalm" id="Q01405"/>
<dbReference type="jPOST" id="Q01405"/>
<dbReference type="PaxDb" id="10090-ENSMUSP00000021375"/>
<dbReference type="PeptideAtlas" id="Q01405"/>
<dbReference type="ProteomicsDB" id="256734"/>
<dbReference type="Pumba" id="Q01405"/>
<dbReference type="Antibodypedia" id="23326">
    <property type="antibodies" value="171 antibodies from 33 providers"/>
</dbReference>
<dbReference type="DNASU" id="20334"/>
<dbReference type="Ensembl" id="ENSMUST00000021375.12">
    <property type="protein sequence ID" value="ENSMUSP00000021375.6"/>
    <property type="gene ID" value="ENSMUSG00000020986.14"/>
</dbReference>
<dbReference type="GeneID" id="20334"/>
<dbReference type="KEGG" id="mmu:20334"/>
<dbReference type="UCSC" id="uc007npw.1">
    <property type="organism name" value="mouse"/>
</dbReference>
<dbReference type="AGR" id="MGI:1349635"/>
<dbReference type="CTD" id="10484"/>
<dbReference type="MGI" id="MGI:1349635">
    <property type="gene designation" value="Sec23a"/>
</dbReference>
<dbReference type="VEuPathDB" id="HostDB:ENSMUSG00000020986"/>
<dbReference type="eggNOG" id="KOG1986">
    <property type="taxonomic scope" value="Eukaryota"/>
</dbReference>
<dbReference type="GeneTree" id="ENSGT00390000006916"/>
<dbReference type="InParanoid" id="Q01405"/>
<dbReference type="OMA" id="FPPHYAE"/>
<dbReference type="OrthoDB" id="10256289at2759"/>
<dbReference type="PhylomeDB" id="Q01405"/>
<dbReference type="TreeFam" id="TF300693"/>
<dbReference type="Reactome" id="R-MMU-204005">
    <property type="pathway name" value="COPII-mediated vesicle transport"/>
</dbReference>
<dbReference type="Reactome" id="R-MMU-2132295">
    <property type="pathway name" value="MHC class II antigen presentation"/>
</dbReference>
<dbReference type="Reactome" id="R-MMU-5694530">
    <property type="pathway name" value="Cargo concentration in the ER"/>
</dbReference>
<dbReference type="Reactome" id="R-MMU-983170">
    <property type="pathway name" value="Antigen Presentation: Folding, assembly and peptide loading of class I MHC"/>
</dbReference>
<dbReference type="BioGRID-ORCS" id="20334">
    <property type="hits" value="1 hit in 77 CRISPR screens"/>
</dbReference>
<dbReference type="ChiTaRS" id="Sec23a">
    <property type="organism name" value="mouse"/>
</dbReference>
<dbReference type="PRO" id="PR:Q01405"/>
<dbReference type="Proteomes" id="UP000000589">
    <property type="component" value="Chromosome 12"/>
</dbReference>
<dbReference type="RNAct" id="Q01405">
    <property type="molecule type" value="protein"/>
</dbReference>
<dbReference type="Bgee" id="ENSMUSG00000020986">
    <property type="expression patterns" value="Expressed in vault of skull and 272 other cell types or tissues"/>
</dbReference>
<dbReference type="ExpressionAtlas" id="Q01405">
    <property type="expression patterns" value="baseline and differential"/>
</dbReference>
<dbReference type="GO" id="GO:0030127">
    <property type="term" value="C:COPII vesicle coat"/>
    <property type="evidence" value="ECO:0000250"/>
    <property type="project" value="UniProtKB"/>
</dbReference>
<dbReference type="GO" id="GO:0030134">
    <property type="term" value="C:COPII-coated ER to Golgi transport vesicle"/>
    <property type="evidence" value="ECO:0000314"/>
    <property type="project" value="MGI"/>
</dbReference>
<dbReference type="GO" id="GO:0005829">
    <property type="term" value="C:cytosol"/>
    <property type="evidence" value="ECO:0000250"/>
    <property type="project" value="UniProtKB"/>
</dbReference>
<dbReference type="GO" id="GO:0070971">
    <property type="term" value="C:endoplasmic reticulum exit site"/>
    <property type="evidence" value="ECO:0000250"/>
    <property type="project" value="UniProtKB"/>
</dbReference>
<dbReference type="GO" id="GO:0005789">
    <property type="term" value="C:endoplasmic reticulum membrane"/>
    <property type="evidence" value="ECO:0000304"/>
    <property type="project" value="Reactome"/>
</dbReference>
<dbReference type="GO" id="GO:0000139">
    <property type="term" value="C:Golgi membrane"/>
    <property type="evidence" value="ECO:0000314"/>
    <property type="project" value="MGI"/>
</dbReference>
<dbReference type="GO" id="GO:0048471">
    <property type="term" value="C:perinuclear region of cytoplasm"/>
    <property type="evidence" value="ECO:0000314"/>
    <property type="project" value="MGI"/>
</dbReference>
<dbReference type="GO" id="GO:0008270">
    <property type="term" value="F:zinc ion binding"/>
    <property type="evidence" value="ECO:0000250"/>
    <property type="project" value="UniProtKB"/>
</dbReference>
<dbReference type="GO" id="GO:0090110">
    <property type="term" value="P:COPII-coated vesicle cargo loading"/>
    <property type="evidence" value="ECO:0000250"/>
    <property type="project" value="UniProtKB"/>
</dbReference>
<dbReference type="GO" id="GO:0006886">
    <property type="term" value="P:intracellular protein transport"/>
    <property type="evidence" value="ECO:0000304"/>
    <property type="project" value="MGI"/>
</dbReference>
<dbReference type="GO" id="GO:0072659">
    <property type="term" value="P:protein localization to plasma membrane"/>
    <property type="evidence" value="ECO:0000315"/>
    <property type="project" value="UniProtKB"/>
</dbReference>
<dbReference type="CDD" id="cd01478">
    <property type="entry name" value="Sec23-like"/>
    <property type="match status" value="1"/>
</dbReference>
<dbReference type="CDD" id="cd11287">
    <property type="entry name" value="Sec23_C"/>
    <property type="match status" value="1"/>
</dbReference>
<dbReference type="FunFam" id="1.20.120.730:FF:000003">
    <property type="entry name" value="Protein transport protein SEC23"/>
    <property type="match status" value="1"/>
</dbReference>
<dbReference type="FunFam" id="2.30.30.380:FF:000001">
    <property type="entry name" value="Protein transport protein SEC23"/>
    <property type="match status" value="1"/>
</dbReference>
<dbReference type="FunFam" id="2.60.40.1670:FF:000006">
    <property type="entry name" value="Protein transport protein SEC23"/>
    <property type="match status" value="1"/>
</dbReference>
<dbReference type="FunFam" id="3.40.20.10:FF:000003">
    <property type="entry name" value="Protein transport protein SEC23"/>
    <property type="match status" value="1"/>
</dbReference>
<dbReference type="FunFam" id="3.40.50.410:FF:000011">
    <property type="entry name" value="Protein transport protein SEC23"/>
    <property type="match status" value="1"/>
</dbReference>
<dbReference type="Gene3D" id="2.60.40.1670">
    <property type="entry name" value="beta-sandwich domain of Sec23/24"/>
    <property type="match status" value="1"/>
</dbReference>
<dbReference type="Gene3D" id="1.20.120.730">
    <property type="entry name" value="Sec23/Sec24 helical domain"/>
    <property type="match status" value="1"/>
</dbReference>
<dbReference type="Gene3D" id="3.40.20.10">
    <property type="entry name" value="Severin"/>
    <property type="match status" value="1"/>
</dbReference>
<dbReference type="Gene3D" id="3.40.50.410">
    <property type="entry name" value="von Willebrand factor, type A domain"/>
    <property type="match status" value="1"/>
</dbReference>
<dbReference type="Gene3D" id="2.30.30.380">
    <property type="entry name" value="Zn-finger domain of Sec23/24"/>
    <property type="match status" value="1"/>
</dbReference>
<dbReference type="InterPro" id="IPR029006">
    <property type="entry name" value="ADF-H/Gelsolin-like_dom_sf"/>
</dbReference>
<dbReference type="InterPro" id="IPR007123">
    <property type="entry name" value="Gelsolin-like_dom"/>
</dbReference>
<dbReference type="InterPro" id="IPR036180">
    <property type="entry name" value="Gelsolin-like_dom_sf"/>
</dbReference>
<dbReference type="InterPro" id="IPR037364">
    <property type="entry name" value="Sec23"/>
</dbReference>
<dbReference type="InterPro" id="IPR006900">
    <property type="entry name" value="Sec23/24_helical_dom"/>
</dbReference>
<dbReference type="InterPro" id="IPR036175">
    <property type="entry name" value="Sec23/24_helical_dom_sf"/>
</dbReference>
<dbReference type="InterPro" id="IPR006896">
    <property type="entry name" value="Sec23/24_trunk_dom"/>
</dbReference>
<dbReference type="InterPro" id="IPR012990">
    <property type="entry name" value="Sec23_24_beta_S"/>
</dbReference>
<dbReference type="InterPro" id="IPR037550">
    <property type="entry name" value="Sec23_C"/>
</dbReference>
<dbReference type="InterPro" id="IPR036465">
    <property type="entry name" value="vWFA_dom_sf"/>
</dbReference>
<dbReference type="InterPro" id="IPR006895">
    <property type="entry name" value="Znf_Sec23_Sec24"/>
</dbReference>
<dbReference type="InterPro" id="IPR036174">
    <property type="entry name" value="Znf_Sec23_Sec24_sf"/>
</dbReference>
<dbReference type="PANTHER" id="PTHR11141">
    <property type="entry name" value="PROTEIN TRANSPORT PROTEIN SEC23"/>
    <property type="match status" value="1"/>
</dbReference>
<dbReference type="PANTHER" id="PTHR11141:SF7">
    <property type="entry name" value="PROTEIN TRANSPORT PROTEIN SEC23A"/>
    <property type="match status" value="1"/>
</dbReference>
<dbReference type="Pfam" id="PF00626">
    <property type="entry name" value="Gelsolin"/>
    <property type="match status" value="1"/>
</dbReference>
<dbReference type="Pfam" id="PF08033">
    <property type="entry name" value="Sec23_BS"/>
    <property type="match status" value="1"/>
</dbReference>
<dbReference type="Pfam" id="PF04815">
    <property type="entry name" value="Sec23_helical"/>
    <property type="match status" value="1"/>
</dbReference>
<dbReference type="Pfam" id="PF04811">
    <property type="entry name" value="Sec23_trunk"/>
    <property type="match status" value="1"/>
</dbReference>
<dbReference type="Pfam" id="PF04810">
    <property type="entry name" value="zf-Sec23_Sec24"/>
    <property type="match status" value="1"/>
</dbReference>
<dbReference type="SUPFAM" id="SSF81995">
    <property type="entry name" value="beta-sandwich domain of Sec23/24"/>
    <property type="match status" value="1"/>
</dbReference>
<dbReference type="SUPFAM" id="SSF82754">
    <property type="entry name" value="C-terminal, gelsolin-like domain of Sec23/24"/>
    <property type="match status" value="1"/>
</dbReference>
<dbReference type="SUPFAM" id="SSF81811">
    <property type="entry name" value="Helical domain of Sec23/24"/>
    <property type="match status" value="1"/>
</dbReference>
<dbReference type="SUPFAM" id="SSF53300">
    <property type="entry name" value="vWA-like"/>
    <property type="match status" value="1"/>
</dbReference>
<dbReference type="SUPFAM" id="SSF82919">
    <property type="entry name" value="Zn-finger domain of Sec23/24"/>
    <property type="match status" value="1"/>
</dbReference>
<accession>Q01405</accession>
<accession>Q8JZL4</accession>